<evidence type="ECO:0000250" key="1">
    <source>
        <dbReference type="UniProtKB" id="P27694"/>
    </source>
</evidence>
<evidence type="ECO:0000255" key="2"/>
<evidence type="ECO:0000256" key="3">
    <source>
        <dbReference type="SAM" id="MobiDB-lite"/>
    </source>
</evidence>
<evidence type="ECO:0000305" key="4"/>
<accession>Q5ZJJ2</accession>
<organism>
    <name type="scientific">Gallus gallus</name>
    <name type="common">Chicken</name>
    <dbReference type="NCBI Taxonomy" id="9031"/>
    <lineage>
        <taxon>Eukaryota</taxon>
        <taxon>Metazoa</taxon>
        <taxon>Chordata</taxon>
        <taxon>Craniata</taxon>
        <taxon>Vertebrata</taxon>
        <taxon>Euteleostomi</taxon>
        <taxon>Archelosauria</taxon>
        <taxon>Archosauria</taxon>
        <taxon>Dinosauria</taxon>
        <taxon>Saurischia</taxon>
        <taxon>Theropoda</taxon>
        <taxon>Coelurosauria</taxon>
        <taxon>Aves</taxon>
        <taxon>Neognathae</taxon>
        <taxon>Galloanserae</taxon>
        <taxon>Galliformes</taxon>
        <taxon>Phasianidae</taxon>
        <taxon>Phasianinae</taxon>
        <taxon>Gallus</taxon>
    </lineage>
</organism>
<reference key="1">
    <citation type="journal article" date="2005" name="Genome Biol.">
        <title>Full-length cDNAs from chicken bursal lymphocytes to facilitate gene function analysis.</title>
        <authorList>
            <person name="Caldwell R.B."/>
            <person name="Kierzek A.M."/>
            <person name="Arakawa H."/>
            <person name="Bezzubov Y."/>
            <person name="Zaim J."/>
            <person name="Fiedler P."/>
            <person name="Kutter S."/>
            <person name="Blagodatski A."/>
            <person name="Kostovska D."/>
            <person name="Koter M."/>
            <person name="Plachy J."/>
            <person name="Carninci P."/>
            <person name="Hayashizaki Y."/>
            <person name="Buerstedde J.-M."/>
        </authorList>
    </citation>
    <scope>NUCLEOTIDE SEQUENCE [LARGE SCALE MRNA]</scope>
    <source>
        <strain>CB</strain>
        <tissue>Bursa of Fabricius</tissue>
    </source>
</reference>
<name>RFA1_CHICK</name>
<comment type="function">
    <text evidence="1">As part of the heterotrimeric replication protein A complex (RPA/RP-A), binds and stabilizes single-stranded DNA intermediates, that form during DNA replication or upon DNA stress. It prevents their reannealing and in parallel, recruits and activates different proteins and complexes involved in DNA metabolism. Thereby, it plays an essential role both in DNA replication and the cellular response to DNA damage.</text>
</comment>
<comment type="subunit">
    <text evidence="1">Component of the heterotrimeric canonical replication protein A complex (RPA).</text>
</comment>
<comment type="subcellular location">
    <subcellularLocation>
        <location evidence="1">Nucleus</location>
    </subcellularLocation>
    <subcellularLocation>
        <location evidence="1">Nucleus</location>
        <location evidence="1">PML body</location>
    </subcellularLocation>
</comment>
<comment type="similarity">
    <text evidence="4">Belongs to the replication factor A protein 1 family.</text>
</comment>
<keyword id="KW-0235">DNA replication</keyword>
<keyword id="KW-0238">DNA-binding</keyword>
<keyword id="KW-0479">Metal-binding</keyword>
<keyword id="KW-0539">Nucleus</keyword>
<keyword id="KW-1185">Reference proteome</keyword>
<keyword id="KW-0862">Zinc</keyword>
<keyword id="KW-0863">Zinc-finger</keyword>
<dbReference type="EMBL" id="AJ720442">
    <property type="protein sequence ID" value="CAG32101.1"/>
    <property type="molecule type" value="mRNA"/>
</dbReference>
<dbReference type="RefSeq" id="NP_001006221.1">
    <property type="nucleotide sequence ID" value="NM_001006221.2"/>
</dbReference>
<dbReference type="RefSeq" id="XP_015151236.1">
    <property type="nucleotide sequence ID" value="XM_015295750.1"/>
</dbReference>
<dbReference type="RefSeq" id="XP_015151237.1">
    <property type="nucleotide sequence ID" value="XM_015295751.1"/>
</dbReference>
<dbReference type="SMR" id="Q5ZJJ2"/>
<dbReference type="FunCoup" id="Q5ZJJ2">
    <property type="interactions" value="2436"/>
</dbReference>
<dbReference type="STRING" id="9031.ENSGALP00000004840"/>
<dbReference type="PaxDb" id="9031-ENSGALP00000004840"/>
<dbReference type="GeneID" id="417563"/>
<dbReference type="KEGG" id="gga:417563"/>
<dbReference type="CTD" id="6117"/>
<dbReference type="VEuPathDB" id="HostDB:geneid_417563"/>
<dbReference type="eggNOG" id="KOG0851">
    <property type="taxonomic scope" value="Eukaryota"/>
</dbReference>
<dbReference type="HOGENOM" id="CLU_012393_2_1_1"/>
<dbReference type="InParanoid" id="Q5ZJJ2"/>
<dbReference type="OMA" id="DQCDAFY"/>
<dbReference type="OrthoDB" id="1751331at2759"/>
<dbReference type="PhylomeDB" id="Q5ZJJ2"/>
<dbReference type="TreeFam" id="TF105241"/>
<dbReference type="Reactome" id="R-GGA-110312">
    <property type="pathway name" value="Translesion synthesis by REV1"/>
</dbReference>
<dbReference type="Reactome" id="R-GGA-110314">
    <property type="pathway name" value="Recognition of DNA damage by PCNA-containing replication complex"/>
</dbReference>
<dbReference type="Reactome" id="R-GGA-110320">
    <property type="pathway name" value="Translesion Synthesis by POLH"/>
</dbReference>
<dbReference type="Reactome" id="R-GGA-176187">
    <property type="pathway name" value="Activation of ATR in response to replication stress"/>
</dbReference>
<dbReference type="Reactome" id="R-GGA-3108214">
    <property type="pathway name" value="SUMOylation of DNA damage response and repair proteins"/>
</dbReference>
<dbReference type="Reactome" id="R-GGA-3371453">
    <property type="pathway name" value="Regulation of HSF1-mediated heat shock response"/>
</dbReference>
<dbReference type="Reactome" id="R-GGA-351451">
    <property type="pathway name" value="Homologous recombination repair of replication-dependent double-strand breaks"/>
</dbReference>
<dbReference type="Reactome" id="R-GGA-351468">
    <property type="pathway name" value="Processing of DNA double-strand break ends"/>
</dbReference>
<dbReference type="Reactome" id="R-GGA-353303">
    <property type="pathway name" value="Nucleotide Excision Repair"/>
</dbReference>
<dbReference type="Reactome" id="R-GGA-5358565">
    <property type="pathway name" value="Mismatch repair (MMR) directed by MSH2:MSH6 (MutSalpha)"/>
</dbReference>
<dbReference type="Reactome" id="R-GGA-5655862">
    <property type="pathway name" value="Translesion synthesis by POLK"/>
</dbReference>
<dbReference type="Reactome" id="R-GGA-5656121">
    <property type="pathway name" value="Translesion synthesis by POLI"/>
</dbReference>
<dbReference type="Reactome" id="R-GGA-5656169">
    <property type="pathway name" value="Termination of translesion DNA synthesis"/>
</dbReference>
<dbReference type="Reactome" id="R-GGA-5685938">
    <property type="pathway name" value="HDR through Single Strand Annealing (SSA)"/>
</dbReference>
<dbReference type="Reactome" id="R-GGA-5685942">
    <property type="pathway name" value="HDR through Homologous Recombination (HRR)"/>
</dbReference>
<dbReference type="Reactome" id="R-GGA-5693607">
    <property type="pathway name" value="Processing of DNA double-strand break ends"/>
</dbReference>
<dbReference type="Reactome" id="R-GGA-5696395">
    <property type="pathway name" value="Formation of Incision Complex in GG-NER"/>
</dbReference>
<dbReference type="Reactome" id="R-GGA-5696397">
    <property type="pathway name" value="Gap-filling DNA repair synthesis and ligation in GG-NER"/>
</dbReference>
<dbReference type="Reactome" id="R-GGA-5696400">
    <property type="pathway name" value="Dual Incision in GG-NER"/>
</dbReference>
<dbReference type="Reactome" id="R-GGA-6782135">
    <property type="pathway name" value="Dual incision in TC-NER"/>
</dbReference>
<dbReference type="Reactome" id="R-GGA-6782210">
    <property type="pathway name" value="Gap-filling DNA repair synthesis and ligation in TC-NER"/>
</dbReference>
<dbReference type="Reactome" id="R-GGA-6783310">
    <property type="pathway name" value="Fanconi Anemia Pathway"/>
</dbReference>
<dbReference type="Reactome" id="R-GGA-68962">
    <property type="pathway name" value="Activation of the pre-replicative complex"/>
</dbReference>
<dbReference type="PRO" id="PR:Q5ZJJ2"/>
<dbReference type="Proteomes" id="UP000000539">
    <property type="component" value="Chromosome 19"/>
</dbReference>
<dbReference type="Bgee" id="ENSGALG00000003072">
    <property type="expression patterns" value="Expressed in spermatid and 13 other cell types or tissues"/>
</dbReference>
<dbReference type="GO" id="GO:0005662">
    <property type="term" value="C:DNA replication factor A complex"/>
    <property type="evidence" value="ECO:0000250"/>
    <property type="project" value="UniProtKB"/>
</dbReference>
<dbReference type="GO" id="GO:0005654">
    <property type="term" value="C:nucleoplasm"/>
    <property type="evidence" value="ECO:0000304"/>
    <property type="project" value="Reactome"/>
</dbReference>
<dbReference type="GO" id="GO:0005634">
    <property type="term" value="C:nucleus"/>
    <property type="evidence" value="ECO:0000250"/>
    <property type="project" value="UniProtKB"/>
</dbReference>
<dbReference type="GO" id="GO:0016605">
    <property type="term" value="C:PML body"/>
    <property type="evidence" value="ECO:0007669"/>
    <property type="project" value="UniProtKB-SubCell"/>
</dbReference>
<dbReference type="GO" id="GO:0003684">
    <property type="term" value="F:damaged DNA binding"/>
    <property type="evidence" value="ECO:0000250"/>
    <property type="project" value="UniProtKB"/>
</dbReference>
<dbReference type="GO" id="GO:0003697">
    <property type="term" value="F:single-stranded DNA binding"/>
    <property type="evidence" value="ECO:0000250"/>
    <property type="project" value="UniProtKB"/>
</dbReference>
<dbReference type="GO" id="GO:0043047">
    <property type="term" value="F:single-stranded telomeric DNA binding"/>
    <property type="evidence" value="ECO:0000318"/>
    <property type="project" value="GO_Central"/>
</dbReference>
<dbReference type="GO" id="GO:0008270">
    <property type="term" value="F:zinc ion binding"/>
    <property type="evidence" value="ECO:0007669"/>
    <property type="project" value="UniProtKB-KW"/>
</dbReference>
<dbReference type="GO" id="GO:0006260">
    <property type="term" value="P:DNA replication"/>
    <property type="evidence" value="ECO:0000250"/>
    <property type="project" value="UniProtKB"/>
</dbReference>
<dbReference type="GO" id="GO:0000724">
    <property type="term" value="P:double-strand break repair via homologous recombination"/>
    <property type="evidence" value="ECO:0000318"/>
    <property type="project" value="GO_Central"/>
</dbReference>
<dbReference type="GO" id="GO:0051321">
    <property type="term" value="P:meiotic cell cycle"/>
    <property type="evidence" value="ECO:0000318"/>
    <property type="project" value="GO_Central"/>
</dbReference>
<dbReference type="GO" id="GO:0006289">
    <property type="term" value="P:nucleotide-excision repair"/>
    <property type="evidence" value="ECO:0000318"/>
    <property type="project" value="GO_Central"/>
</dbReference>
<dbReference type="GO" id="GO:0034502">
    <property type="term" value="P:protein localization to chromosome"/>
    <property type="evidence" value="ECO:0000250"/>
    <property type="project" value="UniProtKB"/>
</dbReference>
<dbReference type="GO" id="GO:0007004">
    <property type="term" value="P:telomere maintenance via telomerase"/>
    <property type="evidence" value="ECO:0000318"/>
    <property type="project" value="GO_Central"/>
</dbReference>
<dbReference type="CDD" id="cd04474">
    <property type="entry name" value="RPA1_DBD_A"/>
    <property type="match status" value="1"/>
</dbReference>
<dbReference type="CDD" id="cd04475">
    <property type="entry name" value="RPA1_DBD_B"/>
    <property type="match status" value="1"/>
</dbReference>
<dbReference type="CDD" id="cd04476">
    <property type="entry name" value="RPA1_DBD_C"/>
    <property type="match status" value="1"/>
</dbReference>
<dbReference type="CDD" id="cd04477">
    <property type="entry name" value="RPA1N"/>
    <property type="match status" value="1"/>
</dbReference>
<dbReference type="FunFam" id="2.40.50.140:FF:000041">
    <property type="entry name" value="Replication protein A subunit"/>
    <property type="match status" value="1"/>
</dbReference>
<dbReference type="FunFam" id="2.40.50.140:FF:000064">
    <property type="entry name" value="Replication protein A subunit"/>
    <property type="match status" value="1"/>
</dbReference>
<dbReference type="FunFam" id="2.40.50.140:FF:000090">
    <property type="entry name" value="Replication protein A subunit"/>
    <property type="match status" value="1"/>
</dbReference>
<dbReference type="FunFam" id="2.40.50.140:FF:000117">
    <property type="entry name" value="Replication protein A subunit"/>
    <property type="match status" value="1"/>
</dbReference>
<dbReference type="Gene3D" id="2.40.50.140">
    <property type="entry name" value="Nucleic acid-binding proteins"/>
    <property type="match status" value="4"/>
</dbReference>
<dbReference type="InterPro" id="IPR047192">
    <property type="entry name" value="Euk_RPA1_DBD_C"/>
</dbReference>
<dbReference type="InterPro" id="IPR012340">
    <property type="entry name" value="NA-bd_OB-fold"/>
</dbReference>
<dbReference type="InterPro" id="IPR004365">
    <property type="entry name" value="NA-bd_OB_tRNA"/>
</dbReference>
<dbReference type="InterPro" id="IPR013955">
    <property type="entry name" value="Rep_factor-A_C"/>
</dbReference>
<dbReference type="InterPro" id="IPR007199">
    <property type="entry name" value="Rep_factor-A_N"/>
</dbReference>
<dbReference type="InterPro" id="IPR031657">
    <property type="entry name" value="REPA_OB_2"/>
</dbReference>
<dbReference type="InterPro" id="IPR004591">
    <property type="entry name" value="Rfa1"/>
</dbReference>
<dbReference type="NCBIfam" id="TIGR00617">
    <property type="entry name" value="rpa1"/>
    <property type="match status" value="1"/>
</dbReference>
<dbReference type="PANTHER" id="PTHR47165">
    <property type="entry name" value="OS03G0429900 PROTEIN"/>
    <property type="match status" value="1"/>
</dbReference>
<dbReference type="PANTHER" id="PTHR47165:SF4">
    <property type="entry name" value="OS03G0429900 PROTEIN"/>
    <property type="match status" value="1"/>
</dbReference>
<dbReference type="Pfam" id="PF04057">
    <property type="entry name" value="Rep-A_N"/>
    <property type="match status" value="1"/>
</dbReference>
<dbReference type="Pfam" id="PF08646">
    <property type="entry name" value="Rep_fac-A_C"/>
    <property type="match status" value="1"/>
</dbReference>
<dbReference type="Pfam" id="PF16900">
    <property type="entry name" value="REPA_OB_2"/>
    <property type="match status" value="1"/>
</dbReference>
<dbReference type="Pfam" id="PF01336">
    <property type="entry name" value="tRNA_anti-codon"/>
    <property type="match status" value="1"/>
</dbReference>
<dbReference type="SUPFAM" id="SSF50249">
    <property type="entry name" value="Nucleic acid-binding proteins"/>
    <property type="match status" value="4"/>
</dbReference>
<protein>
    <recommendedName>
        <fullName>Replication protein A 70 kDa DNA-binding subunit</fullName>
        <shortName>RP-A p70</shortName>
    </recommendedName>
    <alternativeName>
        <fullName>Replication factor A protein 1</fullName>
        <shortName>RF-A protein 1</shortName>
    </alternativeName>
</protein>
<proteinExistence type="evidence at transcript level"/>
<gene>
    <name type="primary">RPA1</name>
    <name type="ORF">RCJMB04_17l6</name>
</gene>
<feature type="chain" id="PRO_0000097263" description="Replication protein A 70 kDa DNA-binding subunit">
    <location>
        <begin position="1"/>
        <end position="614"/>
    </location>
</feature>
<feature type="DNA-binding region" description="OB">
    <location>
        <begin position="194"/>
        <end position="278"/>
    </location>
</feature>
<feature type="zinc finger region" description="C4-type" evidence="2">
    <location>
        <begin position="478"/>
        <end position="500"/>
    </location>
</feature>
<feature type="region of interest" description="Disordered" evidence="3">
    <location>
        <begin position="112"/>
        <end position="178"/>
    </location>
</feature>
<feature type="compositionally biased region" description="Polar residues" evidence="3">
    <location>
        <begin position="120"/>
        <end position="130"/>
    </location>
</feature>
<feature type="compositionally biased region" description="Polar residues" evidence="3">
    <location>
        <begin position="158"/>
        <end position="178"/>
    </location>
</feature>
<sequence>MSVRLSEGAIAAIMQGENVYKPVLQVINTRAIATGNGPPRYRVLMSDGVNTLSSFMLATQLNPLVEEERLSAHCICQVNRFIVNSLKDGRRVVILMDLDVLKTADMVGGTVGNPVPYNEGQGQQRSSAPTANAAPNKPQQQDGNLSVAGSAAPKYHAPSNQFSKASAPSSVKTPGGTQSKVVPIASLNPYQSKWTICARVTQKGQIRTWSNSRGEGKLFSIELVDESGEIRATAFNDQADKFFPLIELNKVYYFTKGNLKTANKQYTAVKNDYEITFNNETSVVPCDDAQHLPSVQFDFVSISDLENTPKDSIVDVIGICKSYEDVTKIVVKASNREVSKRNVHLMDTSGKLVTATLWGNEAEKFDGSRQPVIAIKGARVSDFGGRSLSVLSSSTVVVNPDSPEAFKLRGWFDSEGQLLECASISDVRGGSASGVNTNWKTLYEAKSERLGQGDKADYFSCVGTIVHLRKENCMYQACPSQDCNKKVIDQQNGLYRCEKCDREFPNFKYRMMLLVTIADSLDYQWVTCFQESAEFILGQSATFLGELKDKNEQAFEEVFQNANFNTYEFKIRVKLETYNDESRIKATALDVKPVNYREYSKRLIASIRRNAQLG</sequence>